<keyword id="KW-0378">Hydrolase</keyword>
<keyword id="KW-0464">Manganese</keyword>
<evidence type="ECO:0000255" key="1">
    <source>
        <dbReference type="HAMAP-Rule" id="MF_01518"/>
    </source>
</evidence>
<proteinExistence type="inferred from homology"/>
<sequence length="599" mass="65250">MFNKFDTKPLWEVSKTLSSVAQGLEPADMVIINSRLINVCTREVIENTDVAISCGRIALVGDAKHCIGENTEVIDAKGQYIAPGFLDGHIHVESSMLSVSEYARSVVPHGTVGIYMDPHEICNVLGLNGVRYMIEDGKGTPLKNMVTTPSCVPAVPGFEDTGAAVGPEDVRETMKWDEIVGLGEMMNFPGILYSTDHAHGVVGETLKASKTVTGHYSLPETGKGLNGYIASGVRCCHESTRAEDALAKMRLGMYAMFREGSAWHDLKEVSKAITENKVDSRFAVLISDDTHPHTLLKDGHLDHIIKRAIEEGIEPLTAIQMVTINCAQCFQMDHELGSITPGKCADIVFIEDLKDVKITKVIIDGNLVAKGGLLTTSIAKYDYPEDAMNSMHIKNKITPDSFNIMAPNKEKITARVIEIIPERVGTYERHVELNVKDDKVQCDPSKDVLKAVVFERHHETGTAGYGFVKGFGIKRGAMAATVAHDAHNLLVIGTNDEDMALAANTLIECGGGMVAVQDGKVLGLVPLPIAGLMSNKPLEEMAEMVEKLDSAWKEIGCDIVSPFMTMALIPLACLPELRLTNRGLVDCNKFEFVSLFVEE</sequence>
<protein>
    <recommendedName>
        <fullName evidence="1">Adenine deaminase</fullName>
        <shortName evidence="1">Adenase</shortName>
        <shortName evidence="1">Adenine aminase</shortName>
        <ecNumber evidence="1">3.5.4.2</ecNumber>
    </recommendedName>
</protein>
<dbReference type="EC" id="3.5.4.2" evidence="1"/>
<dbReference type="EMBL" id="CP000726">
    <property type="protein sequence ID" value="ABS34386.1"/>
    <property type="molecule type" value="Genomic_DNA"/>
</dbReference>
<dbReference type="RefSeq" id="WP_011986063.1">
    <property type="nucleotide sequence ID" value="NC_009697.1"/>
</dbReference>
<dbReference type="SMR" id="A7FQU9"/>
<dbReference type="KEGG" id="cba:CLB_0338"/>
<dbReference type="HOGENOM" id="CLU_027935_0_0_9"/>
<dbReference type="GO" id="GO:0000034">
    <property type="term" value="F:adenine deaminase activity"/>
    <property type="evidence" value="ECO:0007669"/>
    <property type="project" value="UniProtKB-UniRule"/>
</dbReference>
<dbReference type="GO" id="GO:0006146">
    <property type="term" value="P:adenine catabolic process"/>
    <property type="evidence" value="ECO:0007669"/>
    <property type="project" value="InterPro"/>
</dbReference>
<dbReference type="CDD" id="cd01295">
    <property type="entry name" value="AdeC"/>
    <property type="match status" value="1"/>
</dbReference>
<dbReference type="FunFam" id="3.20.20.140:FF:000016">
    <property type="entry name" value="Adenine deaminase"/>
    <property type="match status" value="1"/>
</dbReference>
<dbReference type="Gene3D" id="3.20.20.140">
    <property type="entry name" value="Metal-dependent hydrolases"/>
    <property type="match status" value="1"/>
</dbReference>
<dbReference type="Gene3D" id="2.30.40.10">
    <property type="entry name" value="Urease, subunit C, domain 1"/>
    <property type="match status" value="1"/>
</dbReference>
<dbReference type="HAMAP" id="MF_01518">
    <property type="entry name" value="Adenine_deamin"/>
    <property type="match status" value="1"/>
</dbReference>
<dbReference type="InterPro" id="IPR006679">
    <property type="entry name" value="Adenine_deam"/>
</dbReference>
<dbReference type="InterPro" id="IPR026912">
    <property type="entry name" value="Adenine_deam_C"/>
</dbReference>
<dbReference type="InterPro" id="IPR006680">
    <property type="entry name" value="Amidohydro-rel"/>
</dbReference>
<dbReference type="InterPro" id="IPR011059">
    <property type="entry name" value="Metal-dep_hydrolase_composite"/>
</dbReference>
<dbReference type="InterPro" id="IPR032466">
    <property type="entry name" value="Metal_Hydrolase"/>
</dbReference>
<dbReference type="NCBIfam" id="TIGR01178">
    <property type="entry name" value="ade"/>
    <property type="match status" value="1"/>
</dbReference>
<dbReference type="PANTHER" id="PTHR11113:SF2">
    <property type="entry name" value="ADENINE DEAMINASE"/>
    <property type="match status" value="1"/>
</dbReference>
<dbReference type="PANTHER" id="PTHR11113">
    <property type="entry name" value="N-ACETYLGLUCOSAMINE-6-PHOSPHATE DEACETYLASE"/>
    <property type="match status" value="1"/>
</dbReference>
<dbReference type="Pfam" id="PF13382">
    <property type="entry name" value="Adenine_deam_C"/>
    <property type="match status" value="1"/>
</dbReference>
<dbReference type="Pfam" id="PF01979">
    <property type="entry name" value="Amidohydro_1"/>
    <property type="match status" value="1"/>
</dbReference>
<dbReference type="SUPFAM" id="SSF51338">
    <property type="entry name" value="Composite domain of metallo-dependent hydrolases"/>
    <property type="match status" value="1"/>
</dbReference>
<dbReference type="SUPFAM" id="SSF51556">
    <property type="entry name" value="Metallo-dependent hydrolases"/>
    <property type="match status" value="1"/>
</dbReference>
<name>ADEC_CLOB1</name>
<feature type="chain" id="PRO_0000318545" description="Adenine deaminase">
    <location>
        <begin position="1"/>
        <end position="599"/>
    </location>
</feature>
<gene>
    <name evidence="1" type="primary">ade</name>
    <name type="ordered locus">CLB_0338</name>
</gene>
<reference key="1">
    <citation type="journal article" date="2007" name="PLoS ONE">
        <title>Analysis of the neurotoxin complex genes in Clostridium botulinum A1-A4 and B1 strains: BoNT/A3, /Ba4 and /B1 clusters are located within plasmids.</title>
        <authorList>
            <person name="Smith T.J."/>
            <person name="Hill K.K."/>
            <person name="Foley B.T."/>
            <person name="Detter J.C."/>
            <person name="Munk A.C."/>
            <person name="Bruce D.C."/>
            <person name="Doggett N.A."/>
            <person name="Smith L.A."/>
            <person name="Marks J.D."/>
            <person name="Xie G."/>
            <person name="Brettin T.S."/>
        </authorList>
    </citation>
    <scope>NUCLEOTIDE SEQUENCE [LARGE SCALE GENOMIC DNA]</scope>
    <source>
        <strain>ATCC 19397 / Type A</strain>
    </source>
</reference>
<accession>A7FQU9</accession>
<organism>
    <name type="scientific">Clostridium botulinum (strain ATCC 19397 / Type A)</name>
    <dbReference type="NCBI Taxonomy" id="441770"/>
    <lineage>
        <taxon>Bacteria</taxon>
        <taxon>Bacillati</taxon>
        <taxon>Bacillota</taxon>
        <taxon>Clostridia</taxon>
        <taxon>Eubacteriales</taxon>
        <taxon>Clostridiaceae</taxon>
        <taxon>Clostridium</taxon>
    </lineage>
</organism>
<comment type="catalytic activity">
    <reaction evidence="1">
        <text>adenine + H2O + H(+) = hypoxanthine + NH4(+)</text>
        <dbReference type="Rhea" id="RHEA:23688"/>
        <dbReference type="ChEBI" id="CHEBI:15377"/>
        <dbReference type="ChEBI" id="CHEBI:15378"/>
        <dbReference type="ChEBI" id="CHEBI:16708"/>
        <dbReference type="ChEBI" id="CHEBI:17368"/>
        <dbReference type="ChEBI" id="CHEBI:28938"/>
        <dbReference type="EC" id="3.5.4.2"/>
    </reaction>
</comment>
<comment type="cofactor">
    <cofactor evidence="1">
        <name>Mn(2+)</name>
        <dbReference type="ChEBI" id="CHEBI:29035"/>
    </cofactor>
</comment>
<comment type="similarity">
    <text evidence="1">Belongs to the metallo-dependent hydrolases superfamily. Adenine deaminase family.</text>
</comment>